<accession>Q1I6E7</accession>
<keyword id="KW-0963">Cytoplasm</keyword>
<keyword id="KW-0227">DNA damage</keyword>
<keyword id="KW-0233">DNA recombination</keyword>
<keyword id="KW-0234">DNA repair</keyword>
<keyword id="KW-0238">DNA-binding</keyword>
<keyword id="KW-0255">Endonuclease</keyword>
<keyword id="KW-0378">Hydrolase</keyword>
<keyword id="KW-0460">Magnesium</keyword>
<keyword id="KW-0479">Metal-binding</keyword>
<keyword id="KW-0540">Nuclease</keyword>
<protein>
    <recommendedName>
        <fullName evidence="1">Crossover junction endodeoxyribonuclease RuvC</fullName>
        <ecNumber evidence="1">3.1.21.10</ecNumber>
    </recommendedName>
    <alternativeName>
        <fullName evidence="1">Holliday junction nuclease RuvC</fullName>
    </alternativeName>
    <alternativeName>
        <fullName evidence="1">Holliday junction resolvase RuvC</fullName>
    </alternativeName>
</protein>
<proteinExistence type="inferred from homology"/>
<sequence length="174" mass="18437">MTLILGIDPGSRITGFGVVRQTARGCEYVASGCIRTGGGELHERLQIVFRGVSEIIRQHGPVTMGIERVFMARNADSALKLGQARGAAIVAAAEAGLEIAEYSASQVKQAVAGTGGANKEQVMMMVMHLLKLTQKPQIDASDALAIALCHAHTRSSLIPHGLATARRRGGRLRL</sequence>
<comment type="function">
    <text evidence="1">The RuvA-RuvB-RuvC complex processes Holliday junction (HJ) DNA during genetic recombination and DNA repair. Endonuclease that resolves HJ intermediates. Cleaves cruciform DNA by making single-stranded nicks across the HJ at symmetrical positions within the homologous arms, yielding a 5'-phosphate and a 3'-hydroxyl group; requires a central core of homology in the junction. The consensus cleavage sequence is 5'-(A/T)TT(C/G)-3'. Cleavage occurs on the 3'-side of the TT dinucleotide at the point of strand exchange. HJ branch migration catalyzed by RuvA-RuvB allows RuvC to scan DNA until it finds its consensus sequence, where it cleaves and resolves the cruciform DNA.</text>
</comment>
<comment type="catalytic activity">
    <reaction evidence="1">
        <text>Endonucleolytic cleavage at a junction such as a reciprocal single-stranded crossover between two homologous DNA duplexes (Holliday junction).</text>
        <dbReference type="EC" id="3.1.21.10"/>
    </reaction>
</comment>
<comment type="cofactor">
    <cofactor evidence="1">
        <name>Mg(2+)</name>
        <dbReference type="ChEBI" id="CHEBI:18420"/>
    </cofactor>
    <text evidence="1">Binds 2 Mg(2+) ion per subunit.</text>
</comment>
<comment type="subunit">
    <text evidence="1">Homodimer which binds Holliday junction (HJ) DNA. The HJ becomes 2-fold symmetrical on binding to RuvC with unstacked arms; it has a different conformation from HJ DNA in complex with RuvA. In the full resolvosome a probable DNA-RuvA(4)-RuvB(12)-RuvC(2) complex forms which resolves the HJ.</text>
</comment>
<comment type="subcellular location">
    <subcellularLocation>
        <location evidence="1">Cytoplasm</location>
    </subcellularLocation>
</comment>
<comment type="similarity">
    <text evidence="1">Belongs to the RuvC family.</text>
</comment>
<gene>
    <name evidence="1" type="primary">ruvC</name>
    <name type="ordered locus">PSEEN4094</name>
</gene>
<reference key="1">
    <citation type="journal article" date="2006" name="Nat. Biotechnol.">
        <title>Complete genome sequence of the entomopathogenic and metabolically versatile soil bacterium Pseudomonas entomophila.</title>
        <authorList>
            <person name="Vodovar N."/>
            <person name="Vallenet D."/>
            <person name="Cruveiller S."/>
            <person name="Rouy Z."/>
            <person name="Barbe V."/>
            <person name="Acosta C."/>
            <person name="Cattolico L."/>
            <person name="Jubin C."/>
            <person name="Lajus A."/>
            <person name="Segurens B."/>
            <person name="Vacherie B."/>
            <person name="Wincker P."/>
            <person name="Weissenbach J."/>
            <person name="Lemaitre B."/>
            <person name="Medigue C."/>
            <person name="Boccard F."/>
        </authorList>
    </citation>
    <scope>NUCLEOTIDE SEQUENCE [LARGE SCALE GENOMIC DNA]</scope>
    <source>
        <strain>L48</strain>
    </source>
</reference>
<feature type="chain" id="PRO_1000002801" description="Crossover junction endodeoxyribonuclease RuvC">
    <location>
        <begin position="1"/>
        <end position="174"/>
    </location>
</feature>
<feature type="active site" evidence="1">
    <location>
        <position position="8"/>
    </location>
</feature>
<feature type="active site" evidence="1">
    <location>
        <position position="67"/>
    </location>
</feature>
<feature type="active site" evidence="1">
    <location>
        <position position="139"/>
    </location>
</feature>
<feature type="binding site" evidence="1">
    <location>
        <position position="8"/>
    </location>
    <ligand>
        <name>Mg(2+)</name>
        <dbReference type="ChEBI" id="CHEBI:18420"/>
        <label>1</label>
    </ligand>
</feature>
<feature type="binding site" evidence="1">
    <location>
        <position position="67"/>
    </location>
    <ligand>
        <name>Mg(2+)</name>
        <dbReference type="ChEBI" id="CHEBI:18420"/>
        <label>2</label>
    </ligand>
</feature>
<feature type="binding site" evidence="1">
    <location>
        <position position="139"/>
    </location>
    <ligand>
        <name>Mg(2+)</name>
        <dbReference type="ChEBI" id="CHEBI:18420"/>
        <label>1</label>
    </ligand>
</feature>
<dbReference type="EC" id="3.1.21.10" evidence="1"/>
<dbReference type="EMBL" id="CT573326">
    <property type="protein sequence ID" value="CAK16788.1"/>
    <property type="molecule type" value="Genomic_DNA"/>
</dbReference>
<dbReference type="RefSeq" id="WP_011535160.1">
    <property type="nucleotide sequence ID" value="NC_008027.1"/>
</dbReference>
<dbReference type="SMR" id="Q1I6E7"/>
<dbReference type="STRING" id="384676.PSEEN4094"/>
<dbReference type="GeneID" id="32807109"/>
<dbReference type="KEGG" id="pen:PSEEN4094"/>
<dbReference type="eggNOG" id="COG0817">
    <property type="taxonomic scope" value="Bacteria"/>
</dbReference>
<dbReference type="HOGENOM" id="CLU_091257_2_1_6"/>
<dbReference type="OrthoDB" id="9805499at2"/>
<dbReference type="Proteomes" id="UP000000658">
    <property type="component" value="Chromosome"/>
</dbReference>
<dbReference type="GO" id="GO:0005737">
    <property type="term" value="C:cytoplasm"/>
    <property type="evidence" value="ECO:0007669"/>
    <property type="project" value="UniProtKB-SubCell"/>
</dbReference>
<dbReference type="GO" id="GO:0048476">
    <property type="term" value="C:Holliday junction resolvase complex"/>
    <property type="evidence" value="ECO:0007669"/>
    <property type="project" value="UniProtKB-UniRule"/>
</dbReference>
<dbReference type="GO" id="GO:0008821">
    <property type="term" value="F:crossover junction DNA endonuclease activity"/>
    <property type="evidence" value="ECO:0007669"/>
    <property type="project" value="UniProtKB-UniRule"/>
</dbReference>
<dbReference type="GO" id="GO:0003677">
    <property type="term" value="F:DNA binding"/>
    <property type="evidence" value="ECO:0007669"/>
    <property type="project" value="UniProtKB-KW"/>
</dbReference>
<dbReference type="GO" id="GO:0000287">
    <property type="term" value="F:magnesium ion binding"/>
    <property type="evidence" value="ECO:0007669"/>
    <property type="project" value="UniProtKB-UniRule"/>
</dbReference>
<dbReference type="GO" id="GO:0006310">
    <property type="term" value="P:DNA recombination"/>
    <property type="evidence" value="ECO:0007669"/>
    <property type="project" value="UniProtKB-UniRule"/>
</dbReference>
<dbReference type="GO" id="GO:0006281">
    <property type="term" value="P:DNA repair"/>
    <property type="evidence" value="ECO:0007669"/>
    <property type="project" value="UniProtKB-UniRule"/>
</dbReference>
<dbReference type="CDD" id="cd16962">
    <property type="entry name" value="RuvC"/>
    <property type="match status" value="1"/>
</dbReference>
<dbReference type="FunFam" id="3.30.420.10:FF:000002">
    <property type="entry name" value="Crossover junction endodeoxyribonuclease RuvC"/>
    <property type="match status" value="1"/>
</dbReference>
<dbReference type="Gene3D" id="3.30.420.10">
    <property type="entry name" value="Ribonuclease H-like superfamily/Ribonuclease H"/>
    <property type="match status" value="1"/>
</dbReference>
<dbReference type="HAMAP" id="MF_00034">
    <property type="entry name" value="RuvC"/>
    <property type="match status" value="1"/>
</dbReference>
<dbReference type="InterPro" id="IPR012337">
    <property type="entry name" value="RNaseH-like_sf"/>
</dbReference>
<dbReference type="InterPro" id="IPR036397">
    <property type="entry name" value="RNaseH_sf"/>
</dbReference>
<dbReference type="InterPro" id="IPR020563">
    <property type="entry name" value="X-over_junc_endoDNase_Mg_BS"/>
</dbReference>
<dbReference type="InterPro" id="IPR002176">
    <property type="entry name" value="X-over_junc_endoDNase_RuvC"/>
</dbReference>
<dbReference type="NCBIfam" id="TIGR00228">
    <property type="entry name" value="ruvC"/>
    <property type="match status" value="1"/>
</dbReference>
<dbReference type="PANTHER" id="PTHR30194">
    <property type="entry name" value="CROSSOVER JUNCTION ENDODEOXYRIBONUCLEASE RUVC"/>
    <property type="match status" value="1"/>
</dbReference>
<dbReference type="PANTHER" id="PTHR30194:SF3">
    <property type="entry name" value="CROSSOVER JUNCTION ENDODEOXYRIBONUCLEASE RUVC"/>
    <property type="match status" value="1"/>
</dbReference>
<dbReference type="Pfam" id="PF02075">
    <property type="entry name" value="RuvC"/>
    <property type="match status" value="1"/>
</dbReference>
<dbReference type="PRINTS" id="PR00696">
    <property type="entry name" value="RSOLVASERUVC"/>
</dbReference>
<dbReference type="SUPFAM" id="SSF53098">
    <property type="entry name" value="Ribonuclease H-like"/>
    <property type="match status" value="1"/>
</dbReference>
<dbReference type="PROSITE" id="PS01321">
    <property type="entry name" value="RUVC"/>
    <property type="match status" value="1"/>
</dbReference>
<evidence type="ECO:0000255" key="1">
    <source>
        <dbReference type="HAMAP-Rule" id="MF_00034"/>
    </source>
</evidence>
<name>RUVC_PSEE4</name>
<organism>
    <name type="scientific">Pseudomonas entomophila (strain L48)</name>
    <dbReference type="NCBI Taxonomy" id="384676"/>
    <lineage>
        <taxon>Bacteria</taxon>
        <taxon>Pseudomonadati</taxon>
        <taxon>Pseudomonadota</taxon>
        <taxon>Gammaproteobacteria</taxon>
        <taxon>Pseudomonadales</taxon>
        <taxon>Pseudomonadaceae</taxon>
        <taxon>Pseudomonas</taxon>
    </lineage>
</organism>